<keyword id="KW-0007">Acetylation</keyword>
<keyword id="KW-0053">Apoptosis</keyword>
<keyword id="KW-0131">Cell cycle</keyword>
<keyword id="KW-0132">Cell division</keyword>
<keyword id="KW-0963">Cytoplasm</keyword>
<keyword id="KW-0206">Cytoskeleton</keyword>
<keyword id="KW-0227">DNA damage</keyword>
<keyword id="KW-0234">DNA repair</keyword>
<keyword id="KW-0238">DNA-binding</keyword>
<keyword id="KW-1017">Isopeptide bond</keyword>
<keyword id="KW-0456">Lyase</keyword>
<keyword id="KW-0472">Membrane</keyword>
<keyword id="KW-0488">Methylation</keyword>
<keyword id="KW-0496">Mitochondrion</keyword>
<keyword id="KW-0999">Mitochondrion inner membrane</keyword>
<keyword id="KW-0498">Mitosis</keyword>
<keyword id="KW-0539">Nucleus</keyword>
<keyword id="KW-0597">Phosphoprotein</keyword>
<keyword id="KW-1185">Reference proteome</keyword>
<keyword id="KW-0687">Ribonucleoprotein</keyword>
<keyword id="KW-0689">Ribosomal protein</keyword>
<keyword id="KW-0694">RNA-binding</keyword>
<keyword id="KW-0804">Transcription</keyword>
<keyword id="KW-0805">Transcription regulation</keyword>
<keyword id="KW-0810">Translation regulation</keyword>
<keyword id="KW-0832">Ubl conjugation</keyword>
<evidence type="ECO:0000250" key="1">
    <source>
        <dbReference type="UniProtKB" id="P23396"/>
    </source>
</evidence>
<evidence type="ECO:0000250" key="2">
    <source>
        <dbReference type="UniProtKB" id="P62908"/>
    </source>
</evidence>
<evidence type="ECO:0000255" key="3">
    <source>
        <dbReference type="PROSITE-ProRule" id="PRU00118"/>
    </source>
</evidence>
<evidence type="ECO:0000256" key="4">
    <source>
        <dbReference type="SAM" id="MobiDB-lite"/>
    </source>
</evidence>
<evidence type="ECO:0000305" key="5"/>
<name>RS3_BOVIN</name>
<dbReference type="EC" id="4.2.99.18" evidence="1"/>
<dbReference type="EMBL" id="BC102090">
    <property type="protein sequence ID" value="AAI02091.1"/>
    <property type="molecule type" value="mRNA"/>
</dbReference>
<dbReference type="RefSeq" id="NP_001029219.1">
    <property type="nucleotide sequence ID" value="NM_001034047.1"/>
</dbReference>
<dbReference type="SMR" id="Q3T169"/>
<dbReference type="FunCoup" id="Q3T169">
    <property type="interactions" value="2299"/>
</dbReference>
<dbReference type="IntAct" id="Q3T169">
    <property type="interactions" value="1"/>
</dbReference>
<dbReference type="STRING" id="9913.ENSBTAP00000003962"/>
<dbReference type="PaxDb" id="9913-ENSBTAP00000003962"/>
<dbReference type="PeptideAtlas" id="Q3T169"/>
<dbReference type="GeneID" id="326588"/>
<dbReference type="KEGG" id="bta:326588"/>
<dbReference type="CTD" id="6188"/>
<dbReference type="VEuPathDB" id="HostDB:ENSBTAG00000005620"/>
<dbReference type="eggNOG" id="KOG3181">
    <property type="taxonomic scope" value="Eukaryota"/>
</dbReference>
<dbReference type="HOGENOM" id="CLU_058591_2_1_1"/>
<dbReference type="InParanoid" id="Q3T169"/>
<dbReference type="OMA" id="NKKKWMI"/>
<dbReference type="OrthoDB" id="10248446at2759"/>
<dbReference type="TreeFam" id="TF300901"/>
<dbReference type="Reactome" id="R-BTA-156827">
    <property type="pathway name" value="L13a-mediated translational silencing of Ceruloplasmin expression"/>
</dbReference>
<dbReference type="Reactome" id="R-BTA-1799339">
    <property type="pathway name" value="SRP-dependent cotranslational protein targeting to membrane"/>
</dbReference>
<dbReference type="Reactome" id="R-BTA-6791226">
    <property type="pathway name" value="Major pathway of rRNA processing in the nucleolus and cytosol"/>
</dbReference>
<dbReference type="Reactome" id="R-BTA-72649">
    <property type="pathway name" value="Translation initiation complex formation"/>
</dbReference>
<dbReference type="Reactome" id="R-BTA-72689">
    <property type="pathway name" value="Formation of a pool of free 40S subunits"/>
</dbReference>
<dbReference type="Reactome" id="R-BTA-72695">
    <property type="pathway name" value="Formation of the ternary complex, and subsequently, the 43S complex"/>
</dbReference>
<dbReference type="Reactome" id="R-BTA-72702">
    <property type="pathway name" value="Ribosomal scanning and start codon recognition"/>
</dbReference>
<dbReference type="Reactome" id="R-BTA-72706">
    <property type="pathway name" value="GTP hydrolysis and joining of the 60S ribosomal subunit"/>
</dbReference>
<dbReference type="Reactome" id="R-BTA-975956">
    <property type="pathway name" value="Nonsense Mediated Decay (NMD) independent of the Exon Junction Complex (EJC)"/>
</dbReference>
<dbReference type="Reactome" id="R-BTA-975957">
    <property type="pathway name" value="Nonsense Mediated Decay (NMD) enhanced by the Exon Junction Complex (EJC)"/>
</dbReference>
<dbReference type="CD-CODE" id="D7FE2080">
    <property type="entry name" value="Nucleolus"/>
</dbReference>
<dbReference type="Proteomes" id="UP000009136">
    <property type="component" value="Chromosome 15"/>
</dbReference>
<dbReference type="Bgee" id="ENSBTAG00000005620">
    <property type="expression patterns" value="Expressed in myometrium and 105 other cell types or tissues"/>
</dbReference>
<dbReference type="GO" id="GO:0022627">
    <property type="term" value="C:cytosolic small ribosomal subunit"/>
    <property type="evidence" value="ECO:0000318"/>
    <property type="project" value="GO_Central"/>
</dbReference>
<dbReference type="GO" id="GO:0005743">
    <property type="term" value="C:mitochondrial inner membrane"/>
    <property type="evidence" value="ECO:0007669"/>
    <property type="project" value="UniProtKB-SubCell"/>
</dbReference>
<dbReference type="GO" id="GO:0005730">
    <property type="term" value="C:nucleolus"/>
    <property type="evidence" value="ECO:0007669"/>
    <property type="project" value="UniProtKB-SubCell"/>
</dbReference>
<dbReference type="GO" id="GO:0005634">
    <property type="term" value="C:nucleus"/>
    <property type="evidence" value="ECO:0000318"/>
    <property type="project" value="GO_Central"/>
</dbReference>
<dbReference type="GO" id="GO:1990904">
    <property type="term" value="C:ribonucleoprotein complex"/>
    <property type="evidence" value="ECO:0000250"/>
    <property type="project" value="UniProtKB"/>
</dbReference>
<dbReference type="GO" id="GO:0005819">
    <property type="term" value="C:spindle"/>
    <property type="evidence" value="ECO:0007669"/>
    <property type="project" value="UniProtKB-SubCell"/>
</dbReference>
<dbReference type="GO" id="GO:0140078">
    <property type="term" value="F:class I DNA-(apurinic or apyrimidinic site) endonuclease activity"/>
    <property type="evidence" value="ECO:0007669"/>
    <property type="project" value="UniProtKB-EC"/>
</dbReference>
<dbReference type="GO" id="GO:0003677">
    <property type="term" value="F:DNA binding"/>
    <property type="evidence" value="ECO:0007669"/>
    <property type="project" value="UniProtKB-KW"/>
</dbReference>
<dbReference type="GO" id="GO:0003723">
    <property type="term" value="F:RNA binding"/>
    <property type="evidence" value="ECO:0007669"/>
    <property type="project" value="UniProtKB-KW"/>
</dbReference>
<dbReference type="GO" id="GO:0003735">
    <property type="term" value="F:structural constituent of ribosome"/>
    <property type="evidence" value="ECO:0000318"/>
    <property type="project" value="GO_Central"/>
</dbReference>
<dbReference type="GO" id="GO:0006915">
    <property type="term" value="P:apoptotic process"/>
    <property type="evidence" value="ECO:0007669"/>
    <property type="project" value="UniProtKB-KW"/>
</dbReference>
<dbReference type="GO" id="GO:0051301">
    <property type="term" value="P:cell division"/>
    <property type="evidence" value="ECO:0007669"/>
    <property type="project" value="UniProtKB-KW"/>
</dbReference>
<dbReference type="GO" id="GO:0006281">
    <property type="term" value="P:DNA repair"/>
    <property type="evidence" value="ECO:0007669"/>
    <property type="project" value="UniProtKB-KW"/>
</dbReference>
<dbReference type="GO" id="GO:2001235">
    <property type="term" value="P:positive regulation of apoptotic signaling pathway"/>
    <property type="evidence" value="ECO:0000318"/>
    <property type="project" value="GO_Central"/>
</dbReference>
<dbReference type="GO" id="GO:0006417">
    <property type="term" value="P:regulation of translation"/>
    <property type="evidence" value="ECO:0007669"/>
    <property type="project" value="UniProtKB-KW"/>
</dbReference>
<dbReference type="GO" id="GO:0006412">
    <property type="term" value="P:translation"/>
    <property type="evidence" value="ECO:0007669"/>
    <property type="project" value="InterPro"/>
</dbReference>
<dbReference type="CDD" id="cd02413">
    <property type="entry name" value="KH-II_40S_S3"/>
    <property type="match status" value="1"/>
</dbReference>
<dbReference type="FunFam" id="3.30.1140.32:FF:000005">
    <property type="entry name" value="40S ribosomal protein S3"/>
    <property type="match status" value="1"/>
</dbReference>
<dbReference type="FunFam" id="3.30.300.20:FF:000006">
    <property type="entry name" value="40S ribosomal protein S3"/>
    <property type="match status" value="1"/>
</dbReference>
<dbReference type="Gene3D" id="3.30.300.20">
    <property type="match status" value="1"/>
</dbReference>
<dbReference type="Gene3D" id="3.30.1140.32">
    <property type="entry name" value="Ribosomal protein S3, C-terminal domain"/>
    <property type="match status" value="1"/>
</dbReference>
<dbReference type="InterPro" id="IPR015946">
    <property type="entry name" value="KH_dom-like_a/b"/>
</dbReference>
<dbReference type="InterPro" id="IPR004044">
    <property type="entry name" value="KH_dom_type_2"/>
</dbReference>
<dbReference type="InterPro" id="IPR009019">
    <property type="entry name" value="KH_sf_prok-type"/>
</dbReference>
<dbReference type="InterPro" id="IPR036419">
    <property type="entry name" value="Ribosomal_S3_C_sf"/>
</dbReference>
<dbReference type="InterPro" id="IPR001351">
    <property type="entry name" value="Ribosomal_uS3_C"/>
</dbReference>
<dbReference type="InterPro" id="IPR018280">
    <property type="entry name" value="Ribosomal_uS3_CS"/>
</dbReference>
<dbReference type="InterPro" id="IPR005703">
    <property type="entry name" value="Ribosomal_uS3_euk/arc"/>
</dbReference>
<dbReference type="NCBIfam" id="NF003219">
    <property type="entry name" value="PRK04191.1"/>
    <property type="match status" value="1"/>
</dbReference>
<dbReference type="NCBIfam" id="TIGR01008">
    <property type="entry name" value="uS3_euk_arch"/>
    <property type="match status" value="1"/>
</dbReference>
<dbReference type="PANTHER" id="PTHR11760">
    <property type="entry name" value="30S/40S RIBOSOMAL PROTEIN S3"/>
    <property type="match status" value="1"/>
</dbReference>
<dbReference type="PANTHER" id="PTHR11760:SF32">
    <property type="entry name" value="SMALL RIBOSOMAL SUBUNIT PROTEIN US3"/>
    <property type="match status" value="1"/>
</dbReference>
<dbReference type="Pfam" id="PF07650">
    <property type="entry name" value="KH_2"/>
    <property type="match status" value="1"/>
</dbReference>
<dbReference type="Pfam" id="PF00189">
    <property type="entry name" value="Ribosomal_S3_C"/>
    <property type="match status" value="1"/>
</dbReference>
<dbReference type="SUPFAM" id="SSF54814">
    <property type="entry name" value="Prokaryotic type KH domain (KH-domain type II)"/>
    <property type="match status" value="1"/>
</dbReference>
<dbReference type="SUPFAM" id="SSF54821">
    <property type="entry name" value="Ribosomal protein S3 C-terminal domain"/>
    <property type="match status" value="1"/>
</dbReference>
<dbReference type="PROSITE" id="PS50823">
    <property type="entry name" value="KH_TYPE_2"/>
    <property type="match status" value="1"/>
</dbReference>
<dbReference type="PROSITE" id="PS00548">
    <property type="entry name" value="RIBOSOMAL_S3"/>
    <property type="match status" value="1"/>
</dbReference>
<sequence>MAVQISKKRKFVADGIFKAELNEFLTRELAEDGYSGVEVRVTPTRTEIIILATRTQNVLGEKGRRIRELTAVVQKRFGFPEGSVELYAEKVATRGLCAIAQAESLRYKLLGGLAVRRACYGVLRFIMESGAKGCEVVVSGKLRGQRAKSMKFVDGLMIHSGDPVNYYVDTAVRHVLLRQGVLGIKVKIMLPWDPTGKIGPKKPLPDHVSIVEPKDEILPTTPISEQKGGKPEPPAMPQPVPTA</sequence>
<gene>
    <name type="primary">RPS3</name>
</gene>
<reference key="1">
    <citation type="submission" date="2005-08" db="EMBL/GenBank/DDBJ databases">
        <authorList>
            <consortium name="NIH - Mammalian Gene Collection (MGC) project"/>
        </authorList>
    </citation>
    <scope>NUCLEOTIDE SEQUENCE [LARGE SCALE MRNA]</scope>
    <source>
        <strain>Crossbred X Angus</strain>
        <tissue>Ileum</tissue>
    </source>
</reference>
<protein>
    <recommendedName>
        <fullName evidence="5">Small ribosomal subunit protein uS3</fullName>
        <ecNumber evidence="1">4.2.99.18</ecNumber>
    </recommendedName>
    <alternativeName>
        <fullName>40S ribosomal protein S3</fullName>
    </alternativeName>
</protein>
<organism>
    <name type="scientific">Bos taurus</name>
    <name type="common">Bovine</name>
    <dbReference type="NCBI Taxonomy" id="9913"/>
    <lineage>
        <taxon>Eukaryota</taxon>
        <taxon>Metazoa</taxon>
        <taxon>Chordata</taxon>
        <taxon>Craniata</taxon>
        <taxon>Vertebrata</taxon>
        <taxon>Euteleostomi</taxon>
        <taxon>Mammalia</taxon>
        <taxon>Eutheria</taxon>
        <taxon>Laurasiatheria</taxon>
        <taxon>Artiodactyla</taxon>
        <taxon>Ruminantia</taxon>
        <taxon>Pecora</taxon>
        <taxon>Bovidae</taxon>
        <taxon>Bovinae</taxon>
        <taxon>Bos</taxon>
    </lineage>
</organism>
<accession>Q3T169</accession>
<feature type="initiator methionine" description="Removed" evidence="1">
    <location>
        <position position="1"/>
    </location>
</feature>
<feature type="chain" id="PRO_0000230771" description="Small ribosomal subunit protein uS3">
    <location>
        <begin position="2"/>
        <end position="243"/>
    </location>
</feature>
<feature type="domain" description="KH type-2" evidence="3">
    <location>
        <begin position="21"/>
        <end position="92"/>
    </location>
</feature>
<feature type="region of interest" description="Disordered" evidence="4">
    <location>
        <begin position="214"/>
        <end position="243"/>
    </location>
</feature>
<feature type="compositionally biased region" description="Pro residues" evidence="4">
    <location>
        <begin position="231"/>
        <end position="243"/>
    </location>
</feature>
<feature type="modified residue" description="N-acetylalanine" evidence="1">
    <location>
        <position position="2"/>
    </location>
</feature>
<feature type="modified residue" description="Phosphoserine; by PKC/PRKCD" evidence="1">
    <location>
        <position position="6"/>
    </location>
</feature>
<feature type="modified residue" description="Phosphoserine" evidence="1">
    <location>
        <position position="35"/>
    </location>
</feature>
<feature type="modified residue" description="Phosphothreonine; by MAPK" evidence="1">
    <location>
        <position position="42"/>
    </location>
</feature>
<feature type="modified residue" description="N6-acetyllysine" evidence="1">
    <location>
        <position position="62"/>
    </location>
</feature>
<feature type="modified residue" description="Asymmetric dimethylarginine; by PRMT1" evidence="1">
    <location>
        <position position="64"/>
    </location>
</feature>
<feature type="modified residue" description="Asymmetric dimethylarginine; by PRMT1" evidence="1">
    <location>
        <position position="65"/>
    </location>
</feature>
<feature type="modified residue" description="Asymmetric dimethylarginine; by PRMT1" evidence="1">
    <location>
        <position position="67"/>
    </location>
</feature>
<feature type="modified residue" description="Phosphothreonine; by PKB" evidence="1">
    <location>
        <position position="70"/>
    </location>
</feature>
<feature type="modified residue" description="Phosphoserine" evidence="1">
    <location>
        <position position="104"/>
    </location>
</feature>
<feature type="modified residue" description="N6-succinyllysine" evidence="2">
    <location>
        <position position="132"/>
    </location>
</feature>
<feature type="modified residue" description="Phosphoserine; by IKKB" evidence="1">
    <location>
        <position position="209"/>
    </location>
</feature>
<feature type="modified residue" description="Phosphothreonine" evidence="1">
    <location>
        <position position="220"/>
    </location>
</feature>
<feature type="modified residue" description="Phosphothreonine; by CDK1 and PKC/PRKCD" evidence="1">
    <location>
        <position position="221"/>
    </location>
</feature>
<feature type="modified residue" description="Phosphoserine" evidence="1">
    <location>
        <position position="224"/>
    </location>
</feature>
<feature type="modified residue" description="Phosphothreonine" evidence="1">
    <location>
        <position position="242"/>
    </location>
</feature>
<feature type="cross-link" description="Glycyl lysine isopeptide (Lys-Gly) (interchain with G-Cter in ubiquitin)" evidence="1">
    <location>
        <position position="90"/>
    </location>
</feature>
<feature type="cross-link" description="Glycyl lysine isopeptide (Lys-Gly) (interchain with G-Cter in ubiquitin)" evidence="1">
    <location>
        <position position="202"/>
    </location>
</feature>
<feature type="cross-link" description="Glycyl lysine isopeptide (Lys-Gly) (interchain with G-Cter in SUMO2); alternate" evidence="1">
    <location>
        <position position="214"/>
    </location>
</feature>
<feature type="cross-link" description="Glycyl lysine isopeptide (Lys-Gly) (interchain with G-Cter in ubiquitin); alternate" evidence="1">
    <location>
        <position position="214"/>
    </location>
</feature>
<feature type="cross-link" description="Glycyl lysine isopeptide (Lys-Gly) (interchain with G-Cter in SUMO2)" evidence="1">
    <location>
        <position position="230"/>
    </location>
</feature>
<proteinExistence type="evidence at transcript level"/>
<comment type="function">
    <text evidence="1">Component of the small ribosomal subunit. The ribosome is a large ribonucleoprotein complex responsible for the synthesis of proteins in the cell. Has endonuclease activity and plays a role in repair of damaged DNA. Cleaves phosphodiester bonds of DNAs containing altered bases with broad specificity and cleaves supercoiled DNA more efficiently than relaxed DNA. Displays high binding affinity for 7,8-dihydro-8-oxoguanine (8-oxoG), a common DNA lesion caused by reactive oxygen species (ROS). Has also been shown to bind with similar affinity to intact and damaged DNA. Stimulates the N-glycosylase activity of the base excision protein OGG1. Enhances the uracil excision activity of UNG1. Also stimulates the cleavage of the phosphodiester backbone by APEX1. When located in the mitochondrion, reduces cellular ROS levels and mitochondrial DNA damage. Has also been shown to negatively regulate DNA repair in cells exposed to hydrogen peroxide. Plays a role in regulating transcription as part of the NF-kappa-B p65-p50 complex where it binds to the RELA/p65 subunit, enhances binding of the complex to DNA and promotes transcription of target genes. Represses its own translation by binding to its cognate mRNA. Binds to and protects TP53/p53 from MDM2-mediated ubiquitination. Involved in spindle formation and chromosome movement during mitosis by regulating microtubule polymerization. Involved in induction of apoptosis through its role in activation of CASP8. Induces neuronal apoptosis by interacting with the E2F1 transcription factor and acting synergistically with it to up-regulate pro-apoptotic proteins BCL2L11/BIM and HRK/Dp5. Interacts with TRADD following exposure to UV radiation and induces apoptosis by caspase-dependent JNK activation.</text>
</comment>
<comment type="catalytic activity">
    <reaction evidence="1">
        <text>2'-deoxyribonucleotide-(2'-deoxyribose 5'-phosphate)-2'-deoxyribonucleotide-DNA = a 3'-end 2'-deoxyribonucleotide-(2,3-dehydro-2,3-deoxyribose 5'-phosphate)-DNA + a 5'-end 5'-phospho-2'-deoxyribonucleoside-DNA + H(+)</text>
        <dbReference type="Rhea" id="RHEA:66592"/>
        <dbReference type="Rhea" id="RHEA-COMP:13180"/>
        <dbReference type="Rhea" id="RHEA-COMP:16897"/>
        <dbReference type="Rhea" id="RHEA-COMP:17067"/>
        <dbReference type="ChEBI" id="CHEBI:15378"/>
        <dbReference type="ChEBI" id="CHEBI:136412"/>
        <dbReference type="ChEBI" id="CHEBI:157695"/>
        <dbReference type="ChEBI" id="CHEBI:167181"/>
        <dbReference type="EC" id="4.2.99.18"/>
    </reaction>
</comment>
<comment type="subunit">
    <text evidence="1 2">Component of the 40S small ribosomal subunit. Identified in a IGF2BP1-dependent mRNP granule complex containing untranslated mRNAs. Interacts with HNRPD. Interacts with PRMT1; the interaction methylates RPS3. Interacts with SUMO1; the interaction sumoylates RPS3. Interacts with UBC9. Interacts with CDK1; the interaction phosphorylates RPS3. Interacts with PRKCD; the interaction phosphorylates RPS3. Interacts with PKB/AKT; the interaction phosphorylates RPS3. Interacts with E2F1; the interaction occurs in the absence of nerve growth factor and increases transcription of pro-apoptotic proteins BCL2L11/BIM and HRK/Dp5. Interacts with the base excision repair proteins APEX1 and OGG1; interaction with OGG1 increases OGG1 N-glycosylase activity. Interacts with UNG; the interaction increases the uracil excision activity of UNG1. Interacts with HSP90; the interaction prevents the ubiquitination and proteasome-dependent degradation of RPS3 and is suppressed by increased ROS levels. Interacts with TOM70; the interaction promotes translocation of RPS3 to the mitochondrion. Interacts (via N-terminus) with RELA (via N-terminus); the interaction enhances the DNA-binding activity of the NF-kappa-B p65-p50 complex. Interacts with NFKBIA; the interaction is direct and may bridge the interaction between RPS3 and RELA. Interacts with IKKB; the interaction phosphorylates RPS3 and enhances its translocation to the nucleus. Interacts (via KH domain) with MDM2 and TP53. Interacts with TRADD. Interacts with CRY1.</text>
</comment>
<comment type="subcellular location">
    <subcellularLocation>
        <location evidence="1">Cytoplasm</location>
    </subcellularLocation>
    <subcellularLocation>
        <location evidence="1">Nucleus</location>
    </subcellularLocation>
    <subcellularLocation>
        <location evidence="1">Nucleus</location>
        <location evidence="1">Nucleolus</location>
    </subcellularLocation>
    <subcellularLocation>
        <location evidence="1">Mitochondrion inner membrane</location>
        <topology evidence="1">Peripheral membrane protein</topology>
    </subcellularLocation>
    <subcellularLocation>
        <location evidence="1">Cytoplasm</location>
        <location evidence="1">Cytoskeleton</location>
        <location evidence="1">Spindle</location>
    </subcellularLocation>
    <text evidence="1 2">In normal cells, located mainly in the cytoplasm with small amounts in the nucleus but translocates to the nucleus in cells undergoing apoptosis. Nuclear translocation is induced by DNA damaging agents such as hydrogen peroxide. Accumulates in the mitochondrion in response to increased ROS levels. Localizes to the spindle during mitosis. Localized in cytoplasmic mRNP granules containing untranslated mRNAs.</text>
</comment>
<comment type="PTM">
    <text evidence="1">Methylation by PRMT1 is required for import into the nucleolus and for ribosome assembly.</text>
</comment>
<comment type="PTM">
    <text evidence="1">Sumoylation by SUMO1 enhances protein stability through increased resistance to proteolysis. Sumoylation occurs at one or more of the three consensus sites, Lys-18, Lys-214 and Lys-230.</text>
</comment>
<comment type="PTM">
    <text evidence="1">Phosphorylation at Thr-221 by CDK1 occurs mainly in G2/M phase. Phosphorylation by PRKCD occurs on a non-ribosomal-associated form which results in translocation of RPS3 to the nucleus and enhances its endonuclease activity. Phosphorylated on Ser-209 by IKKB in response to activation of the NF-kappa-B p65-p50 complex which enhances the association of RPS3 with importin-alpha and mediates the nuclear translocation of RPS3. Phosphorylation by MAPK is required for translocation to the nucleus following exposure of cells to DNA damaging agents such as hydrogen peroxide. Phosphorylation by PKB/AKT mediates RPS3 nuclear translocation, enhances RPS3 endonuclease activity and suppresses RPS3-induced neuronal apoptosis.</text>
</comment>
<comment type="PTM">
    <text evidence="1">Ubiquitinated; ubiquitination is prevented by interaction with HSP90 which stabilizes the protein. Monoubiquitinated at Lys-214 by RNF10 and ZNF598 when a ribosome has stalled during translation of poly(A) sequences, leading to preclude synthesis of a long poly-lysine tail and initiate the ribosome quality control (RQC) pathway to degrade the potentially detrimental aberrant nascent polypeptide. Deubiquitinated at Lys-214 by USP10, preventing degradation by the proteasome and promoting 40S ribosome subunit recycling following ribosome dissociation.</text>
</comment>
<comment type="PTM">
    <text evidence="2">Ufmylated by UFL1.</text>
</comment>
<comment type="similarity">
    <text evidence="5">Belongs to the universal ribosomal protein uS3 family.</text>
</comment>